<dbReference type="EMBL" id="CP000493">
    <property type="protein sequence ID" value="ABM80309.1"/>
    <property type="molecule type" value="Genomic_DNA"/>
</dbReference>
<dbReference type="RefSeq" id="WP_011821627.1">
    <property type="nucleotide sequence ID" value="NC_008818.1"/>
</dbReference>
<dbReference type="SMR" id="A2BJZ8"/>
<dbReference type="STRING" id="415426.Hbut_0443"/>
<dbReference type="EnsemblBacteria" id="ABM80309">
    <property type="protein sequence ID" value="ABM80309"/>
    <property type="gene ID" value="Hbut_0443"/>
</dbReference>
<dbReference type="GeneID" id="4782603"/>
<dbReference type="KEGG" id="hbu:Hbut_0443"/>
<dbReference type="eggNOG" id="arCOG01560">
    <property type="taxonomic scope" value="Archaea"/>
</dbReference>
<dbReference type="HOGENOM" id="CLU_002656_3_3_2"/>
<dbReference type="OrthoDB" id="30957at2157"/>
<dbReference type="Proteomes" id="UP000002593">
    <property type="component" value="Chromosome"/>
</dbReference>
<dbReference type="GO" id="GO:0005737">
    <property type="term" value="C:cytoplasm"/>
    <property type="evidence" value="ECO:0007669"/>
    <property type="project" value="TreeGrafter"/>
</dbReference>
<dbReference type="GO" id="GO:0005525">
    <property type="term" value="F:GTP binding"/>
    <property type="evidence" value="ECO:0007669"/>
    <property type="project" value="UniProtKB-KW"/>
</dbReference>
<dbReference type="GO" id="GO:0003924">
    <property type="term" value="F:GTPase activity"/>
    <property type="evidence" value="ECO:0007669"/>
    <property type="project" value="UniProtKB-UniRule"/>
</dbReference>
<dbReference type="GO" id="GO:0003743">
    <property type="term" value="F:translation initiation factor activity"/>
    <property type="evidence" value="ECO:0007669"/>
    <property type="project" value="UniProtKB-UniRule"/>
</dbReference>
<dbReference type="CDD" id="cd03703">
    <property type="entry name" value="aeIF5B_II"/>
    <property type="match status" value="1"/>
</dbReference>
<dbReference type="CDD" id="cd16266">
    <property type="entry name" value="IF2_aeIF5B_IV"/>
    <property type="match status" value="1"/>
</dbReference>
<dbReference type="CDD" id="cd01887">
    <property type="entry name" value="IF2_eIF5B"/>
    <property type="match status" value="1"/>
</dbReference>
<dbReference type="FunFam" id="3.40.50.300:FF:000112">
    <property type="entry name" value="Eukaryotic translation initiation factor 5B"/>
    <property type="match status" value="1"/>
</dbReference>
<dbReference type="FunFam" id="2.40.30.10:FF:000013">
    <property type="entry name" value="eukaryotic translation initiation factor 5B"/>
    <property type="match status" value="1"/>
</dbReference>
<dbReference type="FunFam" id="3.40.50.10050:FF:000001">
    <property type="entry name" value="Translation initiation factor IF-2"/>
    <property type="match status" value="1"/>
</dbReference>
<dbReference type="Gene3D" id="3.40.50.300">
    <property type="entry name" value="P-loop containing nucleotide triphosphate hydrolases"/>
    <property type="match status" value="1"/>
</dbReference>
<dbReference type="Gene3D" id="2.40.30.10">
    <property type="entry name" value="Translation factors"/>
    <property type="match status" value="2"/>
</dbReference>
<dbReference type="Gene3D" id="3.40.50.10050">
    <property type="entry name" value="Translation initiation factor IF- 2, domain 3"/>
    <property type="match status" value="1"/>
</dbReference>
<dbReference type="HAMAP" id="MF_00100_A">
    <property type="entry name" value="IF_2_A"/>
    <property type="match status" value="1"/>
</dbReference>
<dbReference type="InterPro" id="IPR029459">
    <property type="entry name" value="EFTU-type"/>
</dbReference>
<dbReference type="InterPro" id="IPR027417">
    <property type="entry name" value="P-loop_NTPase"/>
</dbReference>
<dbReference type="InterPro" id="IPR005225">
    <property type="entry name" value="Small_GTP-bd"/>
</dbReference>
<dbReference type="InterPro" id="IPR000795">
    <property type="entry name" value="T_Tr_GTP-bd_dom"/>
</dbReference>
<dbReference type="InterPro" id="IPR004544">
    <property type="entry name" value="TF_aIF-2_arc"/>
</dbReference>
<dbReference type="InterPro" id="IPR015760">
    <property type="entry name" value="TIF_IF2"/>
</dbReference>
<dbReference type="InterPro" id="IPR023115">
    <property type="entry name" value="TIF_IF2_dom3"/>
</dbReference>
<dbReference type="InterPro" id="IPR036925">
    <property type="entry name" value="TIF_IF2_dom3_sf"/>
</dbReference>
<dbReference type="InterPro" id="IPR009000">
    <property type="entry name" value="Transl_B-barrel_sf"/>
</dbReference>
<dbReference type="NCBIfam" id="TIGR00491">
    <property type="entry name" value="aIF-2"/>
    <property type="match status" value="1"/>
</dbReference>
<dbReference type="NCBIfam" id="NF003078">
    <property type="entry name" value="PRK04004.1"/>
    <property type="match status" value="1"/>
</dbReference>
<dbReference type="NCBIfam" id="NF011418">
    <property type="entry name" value="PRK14845.1"/>
    <property type="match status" value="1"/>
</dbReference>
<dbReference type="NCBIfam" id="TIGR00231">
    <property type="entry name" value="small_GTP"/>
    <property type="match status" value="1"/>
</dbReference>
<dbReference type="PANTHER" id="PTHR43381:SF4">
    <property type="entry name" value="EUKARYOTIC TRANSLATION INITIATION FACTOR 5B"/>
    <property type="match status" value="1"/>
</dbReference>
<dbReference type="PANTHER" id="PTHR43381">
    <property type="entry name" value="TRANSLATION INITIATION FACTOR IF-2-RELATED"/>
    <property type="match status" value="1"/>
</dbReference>
<dbReference type="Pfam" id="PF00009">
    <property type="entry name" value="GTP_EFTU"/>
    <property type="match status" value="1"/>
</dbReference>
<dbReference type="Pfam" id="PF14578">
    <property type="entry name" value="GTP_EFTU_D4"/>
    <property type="match status" value="1"/>
</dbReference>
<dbReference type="Pfam" id="PF11987">
    <property type="entry name" value="IF-2"/>
    <property type="match status" value="1"/>
</dbReference>
<dbReference type="PRINTS" id="PR00315">
    <property type="entry name" value="ELONGATNFCT"/>
</dbReference>
<dbReference type="SUPFAM" id="SSF52156">
    <property type="entry name" value="Initiation factor IF2/eIF5b, domain 3"/>
    <property type="match status" value="1"/>
</dbReference>
<dbReference type="SUPFAM" id="SSF52540">
    <property type="entry name" value="P-loop containing nucleoside triphosphate hydrolases"/>
    <property type="match status" value="1"/>
</dbReference>
<dbReference type="SUPFAM" id="SSF50447">
    <property type="entry name" value="Translation proteins"/>
    <property type="match status" value="1"/>
</dbReference>
<dbReference type="PROSITE" id="PS51722">
    <property type="entry name" value="G_TR_2"/>
    <property type="match status" value="1"/>
</dbReference>
<comment type="function">
    <text evidence="2">Function in general translation initiation by promoting the binding of the formylmethionine-tRNA to ribosomes. Seems to function along with eIF-2.</text>
</comment>
<comment type="similarity">
    <text evidence="2">Belongs to the TRAFAC class translation factor GTPase superfamily. Classic translation factor GTPase family. IF-2 subfamily.</text>
</comment>
<evidence type="ECO:0000250" key="1"/>
<evidence type="ECO:0000255" key="2">
    <source>
        <dbReference type="HAMAP-Rule" id="MF_00100"/>
    </source>
</evidence>
<sequence length="612" mass="68179">MAEQKTSGRRLRQPIVVVLGHVDHGKTTLLDKIRGTTVAAKEPGLITQHVGASFVPASVIEKLAEPLKKIIPFKLIIPGLLFIDTPGHELFANLRRRGGSVADFAILVVDINEGFQPQTYESIEILRQRRVPFVVAANKIDKIPGWRANPDTPFLISLQKQAQRVREELERRLWDNIISKLYELGFQADRFDRIRDFTRTVAVIPISAKTGEGIAELLAVLAGLTQRYLQHRLRFAEGPAKGVILEIREQPGLGTAADVVIYDGVLRKGDIIVTGGLNGPVITHVRALLMPKPLQEIRVAKRELEPVEEVYAAAGVRIVAPGLEEAIAGAPVFVARDEGEAKQLAEKVRREIEALRIKTEAEGVIVKADTLGSLEAMIEALRKRDIPIRYADVGPVAKRDVIEAVASRELNKFYGVILAFNVKVLPEAEEEAKKHGITIFTNNVIYRLLEDFEKWYKEQVEAERRKELEKLVRPGKIRLLPGYVFRRSNPAIVGVEVLGGVIKPGYPLMREDGKRIGTIHQIQDKGKVIHEARAGMAVAISIRGHVMVGRHIDEGDVLYTDIPEQHAVLWLTKFKSELTDDEMVVLKEIIKIKRKQNPAYAVVLGKPQGAKP</sequence>
<protein>
    <recommendedName>
        <fullName evidence="2">Probable translation initiation factor IF-2</fullName>
    </recommendedName>
</protein>
<reference key="1">
    <citation type="journal article" date="2007" name="Archaea">
        <title>The genome of Hyperthermus butylicus: a sulfur-reducing, peptide fermenting, neutrophilic Crenarchaeote growing up to 108 degrees C.</title>
        <authorList>
            <person name="Bruegger K."/>
            <person name="Chen L."/>
            <person name="Stark M."/>
            <person name="Zibat A."/>
            <person name="Redder P."/>
            <person name="Ruepp A."/>
            <person name="Awayez M."/>
            <person name="She Q."/>
            <person name="Garrett R.A."/>
            <person name="Klenk H.-P."/>
        </authorList>
    </citation>
    <scope>NUCLEOTIDE SEQUENCE [LARGE SCALE GENOMIC DNA]</scope>
    <source>
        <strain>DSM 5456 / JCM 9403 / PLM1-5</strain>
    </source>
</reference>
<name>IF2P_HYPBU</name>
<organism>
    <name type="scientific">Hyperthermus butylicus (strain DSM 5456 / JCM 9403 / PLM1-5)</name>
    <dbReference type="NCBI Taxonomy" id="415426"/>
    <lineage>
        <taxon>Archaea</taxon>
        <taxon>Thermoproteota</taxon>
        <taxon>Thermoprotei</taxon>
        <taxon>Desulfurococcales</taxon>
        <taxon>Pyrodictiaceae</taxon>
        <taxon>Hyperthermus</taxon>
    </lineage>
</organism>
<feature type="chain" id="PRO_0000335523" description="Probable translation initiation factor IF-2">
    <location>
        <begin position="1"/>
        <end position="612"/>
    </location>
</feature>
<feature type="domain" description="tr-type G">
    <location>
        <begin position="11"/>
        <end position="229"/>
    </location>
</feature>
<feature type="region of interest" description="G1" evidence="1">
    <location>
        <begin position="20"/>
        <end position="27"/>
    </location>
</feature>
<feature type="region of interest" description="G2" evidence="1">
    <location>
        <begin position="45"/>
        <end position="49"/>
    </location>
</feature>
<feature type="region of interest" description="G3" evidence="1">
    <location>
        <begin position="84"/>
        <end position="87"/>
    </location>
</feature>
<feature type="region of interest" description="G4" evidence="1">
    <location>
        <begin position="138"/>
        <end position="141"/>
    </location>
</feature>
<feature type="region of interest" description="G5" evidence="1">
    <location>
        <begin position="207"/>
        <end position="209"/>
    </location>
</feature>
<feature type="binding site" evidence="2">
    <location>
        <begin position="20"/>
        <end position="27"/>
    </location>
    <ligand>
        <name>GTP</name>
        <dbReference type="ChEBI" id="CHEBI:37565"/>
    </ligand>
</feature>
<feature type="binding site" evidence="2">
    <location>
        <begin position="84"/>
        <end position="88"/>
    </location>
    <ligand>
        <name>GTP</name>
        <dbReference type="ChEBI" id="CHEBI:37565"/>
    </ligand>
</feature>
<feature type="binding site" evidence="2">
    <location>
        <begin position="138"/>
        <end position="141"/>
    </location>
    <ligand>
        <name>GTP</name>
        <dbReference type="ChEBI" id="CHEBI:37565"/>
    </ligand>
</feature>
<keyword id="KW-0342">GTP-binding</keyword>
<keyword id="KW-0396">Initiation factor</keyword>
<keyword id="KW-0547">Nucleotide-binding</keyword>
<keyword id="KW-0648">Protein biosynthesis</keyword>
<keyword id="KW-1185">Reference proteome</keyword>
<proteinExistence type="inferred from homology"/>
<gene>
    <name evidence="2" type="primary">infB</name>
    <name type="ordered locus">Hbut_0443</name>
</gene>
<accession>A2BJZ8</accession>